<sequence length="358" mass="40964">MEELSQALASSFSVSQELNSTAAPHPRLSQYKSKYSSLEQSERRRQLLELQKSKRLDYVNHARRLAEDDWTGMESGEEEKKKDEEEMDLDPVKKLPKRYANQLMLSEWLIDVPSDLGQEWIVVVCPVGKRALIVASRGSTSAYTKSGYCVNRFSSLLPGGNRRNSTTAKDYTILDCIYSEVNQTYYVLDVMCWRGHPFYDCQTDFRFYWMNSKLPEEEGLGEKTKINPFKFVGLKNFPCTPESLCKVLSMDFPFEVDGLLFYHKQTHYSPGSTPLVGWLRPYMVSDILGVAVPAGPLTTKPEYAGHQLQQIIEHKRSQEDTKEKLTHKASENGHYELEHLSTPKLRSPPHSSESLMDS</sequence>
<proteinExistence type="evidence at transcript level"/>
<keyword id="KW-0007">Acetylation</keyword>
<keyword id="KW-0963">Cytoplasm</keyword>
<keyword id="KW-0539">Nucleus</keyword>
<keyword id="KW-0597">Phosphoprotein</keyword>
<keyword id="KW-1185">Reference proteome</keyword>
<keyword id="KW-0694">RNA-binding</keyword>
<keyword id="KW-0813">Transport</keyword>
<protein>
    <recommendedName>
        <fullName>Snurportin-1</fullName>
    </recommendedName>
    <alternativeName>
        <fullName>RNA U transporter 1</fullName>
    </alternativeName>
</protein>
<dbReference type="EMBL" id="BC079451">
    <property type="protein sequence ID" value="AAH79451.1"/>
    <property type="molecule type" value="mRNA"/>
</dbReference>
<dbReference type="RefSeq" id="NP_001004270.1">
    <property type="nucleotide sequence ID" value="NM_001004270.1"/>
</dbReference>
<dbReference type="RefSeq" id="XP_006243187.1">
    <property type="nucleotide sequence ID" value="XM_006243125.1"/>
</dbReference>
<dbReference type="RefSeq" id="XP_006243188.1">
    <property type="nucleotide sequence ID" value="XM_006243126.1"/>
</dbReference>
<dbReference type="RefSeq" id="XP_006243189.1">
    <property type="nucleotide sequence ID" value="XM_006243127.3"/>
</dbReference>
<dbReference type="SMR" id="Q68FP5"/>
<dbReference type="FunCoup" id="Q68FP5">
    <property type="interactions" value="2666"/>
</dbReference>
<dbReference type="STRING" id="10116.ENSRNOP00000007261"/>
<dbReference type="iPTMnet" id="Q68FP5"/>
<dbReference type="PhosphoSitePlus" id="Q68FP5"/>
<dbReference type="PaxDb" id="10116-ENSRNOP00000007261"/>
<dbReference type="Ensembl" id="ENSRNOT00000007261.5">
    <property type="protein sequence ID" value="ENSRNOP00000007261.4"/>
    <property type="gene ID" value="ENSRNOG00000005426.5"/>
</dbReference>
<dbReference type="GeneID" id="316108"/>
<dbReference type="KEGG" id="rno:316108"/>
<dbReference type="UCSC" id="RGD:1303191">
    <property type="organism name" value="rat"/>
</dbReference>
<dbReference type="AGR" id="RGD:1303191"/>
<dbReference type="CTD" id="10073"/>
<dbReference type="RGD" id="1303191">
    <property type="gene designation" value="Snupn"/>
</dbReference>
<dbReference type="eggNOG" id="KOG3132">
    <property type="taxonomic scope" value="Eukaryota"/>
</dbReference>
<dbReference type="GeneTree" id="ENSGT00510000047494"/>
<dbReference type="HOGENOM" id="CLU_056809_0_0_1"/>
<dbReference type="InParanoid" id="Q68FP5"/>
<dbReference type="OMA" id="ENWIMVP"/>
<dbReference type="OrthoDB" id="10003593at2759"/>
<dbReference type="PhylomeDB" id="Q68FP5"/>
<dbReference type="TreeFam" id="TF313108"/>
<dbReference type="Reactome" id="R-RNO-191859">
    <property type="pathway name" value="snRNP Assembly"/>
</dbReference>
<dbReference type="PRO" id="PR:Q68FP5"/>
<dbReference type="Proteomes" id="UP000002494">
    <property type="component" value="Chromosome 8"/>
</dbReference>
<dbReference type="Bgee" id="ENSRNOG00000005426">
    <property type="expression patterns" value="Expressed in pancreas and 20 other cell types or tissues"/>
</dbReference>
<dbReference type="GO" id="GO:0005737">
    <property type="term" value="C:cytoplasm"/>
    <property type="evidence" value="ECO:0007669"/>
    <property type="project" value="UniProtKB-SubCell"/>
</dbReference>
<dbReference type="GO" id="GO:0042564">
    <property type="term" value="C:NLS-dependent protein nuclear import complex"/>
    <property type="evidence" value="ECO:0000266"/>
    <property type="project" value="RGD"/>
</dbReference>
<dbReference type="GO" id="GO:0005846">
    <property type="term" value="C:nuclear cap binding complex"/>
    <property type="evidence" value="ECO:0000304"/>
    <property type="project" value="RGD"/>
</dbReference>
<dbReference type="GO" id="GO:0005643">
    <property type="term" value="C:nuclear pore"/>
    <property type="evidence" value="ECO:0000304"/>
    <property type="project" value="RGD"/>
</dbReference>
<dbReference type="GO" id="GO:0005634">
    <property type="term" value="C:nucleus"/>
    <property type="evidence" value="ECO:0000250"/>
    <property type="project" value="UniProtKB"/>
</dbReference>
<dbReference type="GO" id="GO:0061608">
    <property type="term" value="F:nuclear import signal receptor activity"/>
    <property type="evidence" value="ECO:0007669"/>
    <property type="project" value="InterPro"/>
</dbReference>
<dbReference type="GO" id="GO:0000339">
    <property type="term" value="F:RNA cap binding"/>
    <property type="evidence" value="ECO:0000304"/>
    <property type="project" value="RGD"/>
</dbReference>
<dbReference type="GO" id="GO:0007010">
    <property type="term" value="P:cytoskeleton organization"/>
    <property type="evidence" value="ECO:0000250"/>
    <property type="project" value="UniProtKB"/>
</dbReference>
<dbReference type="GO" id="GO:0051259">
    <property type="term" value="P:protein complex oligomerization"/>
    <property type="evidence" value="ECO:0000250"/>
    <property type="project" value="UniProtKB"/>
</dbReference>
<dbReference type="GO" id="GO:0006606">
    <property type="term" value="P:protein import into nucleus"/>
    <property type="evidence" value="ECO:0007669"/>
    <property type="project" value="InterPro"/>
</dbReference>
<dbReference type="GO" id="GO:0051262">
    <property type="term" value="P:protein tetramerization"/>
    <property type="evidence" value="ECO:0000250"/>
    <property type="project" value="UniProtKB"/>
</dbReference>
<dbReference type="GO" id="GO:0006404">
    <property type="term" value="P:RNA import into nucleus"/>
    <property type="evidence" value="ECO:0000250"/>
    <property type="project" value="UniProtKB"/>
</dbReference>
<dbReference type="GO" id="GO:0061015">
    <property type="term" value="P:snRNA import into nucleus"/>
    <property type="evidence" value="ECO:0007669"/>
    <property type="project" value="InterPro"/>
</dbReference>
<dbReference type="CDD" id="cd09232">
    <property type="entry name" value="Snurportin-1_C"/>
    <property type="match status" value="1"/>
</dbReference>
<dbReference type="FunFam" id="3.30.470.30:FF:000010">
    <property type="entry name" value="Snurportin-1"/>
    <property type="match status" value="1"/>
</dbReference>
<dbReference type="Gene3D" id="3.30.470.30">
    <property type="entry name" value="DNA ligase/mRNA capping enzyme"/>
    <property type="match status" value="1"/>
</dbReference>
<dbReference type="InterPro" id="IPR002652">
    <property type="entry name" value="Importin-a_IBB"/>
</dbReference>
<dbReference type="InterPro" id="IPR017336">
    <property type="entry name" value="Snurportin-1"/>
</dbReference>
<dbReference type="InterPro" id="IPR024721">
    <property type="entry name" value="Snurportin-1_N"/>
</dbReference>
<dbReference type="InterPro" id="IPR047857">
    <property type="entry name" value="Snurportin1_C"/>
</dbReference>
<dbReference type="PANTHER" id="PTHR13403:SF6">
    <property type="entry name" value="SNURPORTIN-1"/>
    <property type="match status" value="1"/>
</dbReference>
<dbReference type="PANTHER" id="PTHR13403">
    <property type="entry name" value="SNURPORTIN1 RNUT1 PROTEIN RNA, U TRANSPORTER 1"/>
    <property type="match status" value="1"/>
</dbReference>
<dbReference type="Pfam" id="PF11538">
    <property type="entry name" value="Snurportin1"/>
    <property type="match status" value="1"/>
</dbReference>
<dbReference type="Pfam" id="PF21974">
    <property type="entry name" value="SPN1_m3Gcap_bd"/>
    <property type="match status" value="1"/>
</dbReference>
<dbReference type="PIRSF" id="PIRSF037955">
    <property type="entry name" value="Snurportin-1"/>
    <property type="match status" value="1"/>
</dbReference>
<dbReference type="SUPFAM" id="SSF56091">
    <property type="entry name" value="DNA ligase/mRNA capping enzyme, catalytic domain"/>
    <property type="match status" value="1"/>
</dbReference>
<dbReference type="PROSITE" id="PS51214">
    <property type="entry name" value="IBB"/>
    <property type="match status" value="1"/>
</dbReference>
<evidence type="ECO:0000250" key="1">
    <source>
        <dbReference type="UniProtKB" id="O95149"/>
    </source>
</evidence>
<evidence type="ECO:0000255" key="2">
    <source>
        <dbReference type="PROSITE-ProRule" id="PRU00561"/>
    </source>
</evidence>
<evidence type="ECO:0000256" key="3">
    <source>
        <dbReference type="SAM" id="MobiDB-lite"/>
    </source>
</evidence>
<evidence type="ECO:0000305" key="4"/>
<organism>
    <name type="scientific">Rattus norvegicus</name>
    <name type="common">Rat</name>
    <dbReference type="NCBI Taxonomy" id="10116"/>
    <lineage>
        <taxon>Eukaryota</taxon>
        <taxon>Metazoa</taxon>
        <taxon>Chordata</taxon>
        <taxon>Craniata</taxon>
        <taxon>Vertebrata</taxon>
        <taxon>Euteleostomi</taxon>
        <taxon>Mammalia</taxon>
        <taxon>Eutheria</taxon>
        <taxon>Euarchontoglires</taxon>
        <taxon>Glires</taxon>
        <taxon>Rodentia</taxon>
        <taxon>Myomorpha</taxon>
        <taxon>Muroidea</taxon>
        <taxon>Muridae</taxon>
        <taxon>Murinae</taxon>
        <taxon>Rattus</taxon>
    </lineage>
</organism>
<gene>
    <name type="primary">Snupn</name>
    <name type="synonym">Rnut1</name>
</gene>
<reference key="1">
    <citation type="journal article" date="2004" name="Genome Res.">
        <title>The status, quality, and expansion of the NIH full-length cDNA project: the Mammalian Gene Collection (MGC).</title>
        <authorList>
            <consortium name="The MGC Project Team"/>
        </authorList>
    </citation>
    <scope>NUCLEOTIDE SEQUENCE [LARGE SCALE MRNA]</scope>
    <source>
        <tissue>Lung</tissue>
    </source>
</reference>
<name>SPN1_RAT</name>
<comment type="function">
    <text evidence="1">Functions as an U snRNP-specific nuclear import adapter. Involved in the trimethylguanosine (m3G)-cap-dependent nuclear import of U snRNPs. Binds specifically to the terminal m3G-cap U snRNAs.</text>
</comment>
<comment type="subunit">
    <text evidence="1">Component of an import snRNP complex composed of KPNB1, SNUPN, SMN1 and ZNF259. Component of a nuclear export receptor complex composed of KPNB1, Ran, SNUPN and XPO1. Found in a trimeric export complex with SNUPN, Ran and XPO1. Interacts (via IBB domain) with KPNB1; the interaction is direct. Interacts with DDX20, IPO7, SMN1, SNRPB and XPO1. Interacts directly with XPO1. Its interaction with XPO1 and binding to m3G-cap U snRNPs appears to be mutually exclusive. Can form homomers.</text>
</comment>
<comment type="subcellular location">
    <subcellularLocation>
        <location evidence="1">Nucleus</location>
    </subcellularLocation>
    <subcellularLocation>
        <location evidence="1">Cytoplasm</location>
    </subcellularLocation>
    <text evidence="1">Nucleoplasmic shuttling protein. Its nuclear import involves the nucleocytoplasmic transport receptor importin beta. It is re-exported to the cytoplasm by the XPO1-dependent nuclear export receptor pathway.</text>
</comment>
<comment type="similarity">
    <text evidence="4">Belongs to the snurportin family.</text>
</comment>
<feature type="chain" id="PRO_0000191073" description="Snurportin-1">
    <location>
        <begin position="1"/>
        <end position="358"/>
    </location>
</feature>
<feature type="domain" description="IBB" evidence="2">
    <location>
        <begin position="11"/>
        <end position="73"/>
    </location>
</feature>
<feature type="region of interest" description="Necessary for interaction with XPO1" evidence="1">
    <location>
        <begin position="1"/>
        <end position="160"/>
    </location>
</feature>
<feature type="region of interest" description="Necessary for interaction with KPNB1 and m3G-cap U1 and U5 snRNP import receptor activity" evidence="1">
    <location>
        <begin position="1"/>
        <end position="65"/>
    </location>
</feature>
<feature type="region of interest" description="Disordered" evidence="3">
    <location>
        <begin position="1"/>
        <end position="39"/>
    </location>
</feature>
<feature type="region of interest" description="Disordered" evidence="3">
    <location>
        <begin position="69"/>
        <end position="89"/>
    </location>
</feature>
<feature type="region of interest" description="Interaction with m3G-cap structure" evidence="1">
    <location>
        <begin position="128"/>
        <end position="130"/>
    </location>
</feature>
<feature type="region of interest" description="Necessary for binding to the m3G-cap structure" evidence="1">
    <location>
        <begin position="210"/>
        <end position="329"/>
    </location>
</feature>
<feature type="region of interest" description="Disordered" evidence="3">
    <location>
        <begin position="315"/>
        <end position="358"/>
    </location>
</feature>
<feature type="compositionally biased region" description="Polar residues" evidence="3">
    <location>
        <begin position="7"/>
        <end position="22"/>
    </location>
</feature>
<feature type="compositionally biased region" description="Polar residues" evidence="3">
    <location>
        <begin position="30"/>
        <end position="39"/>
    </location>
</feature>
<feature type="compositionally biased region" description="Basic and acidic residues" evidence="3">
    <location>
        <begin position="315"/>
        <end position="341"/>
    </location>
</feature>
<feature type="compositionally biased region" description="Polar residues" evidence="3">
    <location>
        <begin position="349"/>
        <end position="358"/>
    </location>
</feature>
<feature type="site" description="Interaction with m3G-cap structure" evidence="1">
    <location>
        <position position="106"/>
    </location>
</feature>
<feature type="site" description="Interaction with m3G-cap structure" evidence="1">
    <location>
        <position position="145"/>
    </location>
</feature>
<feature type="site" description="Interaction with m3G-cap structure" evidence="1">
    <location>
        <position position="278"/>
    </location>
</feature>
<feature type="modified residue" description="N-acetylmethionine" evidence="1">
    <location>
        <position position="1"/>
    </location>
</feature>
<feature type="modified residue" description="Phosphoserine" evidence="1">
    <location>
        <position position="75"/>
    </location>
</feature>
<feature type="modified residue" description="Phosphoserine" evidence="1">
    <location>
        <position position="351"/>
    </location>
</feature>
<accession>Q68FP5</accession>